<feature type="chain" id="PRO_0000122693" description="Protein RecA">
    <location>
        <begin position="1"/>
        <end position="350"/>
    </location>
</feature>
<feature type="binding site" evidence="1">
    <location>
        <begin position="65"/>
        <end position="72"/>
    </location>
    <ligand>
        <name>ATP</name>
        <dbReference type="ChEBI" id="CHEBI:30616"/>
    </ligand>
</feature>
<accession>Q895I5</accession>
<reference key="1">
    <citation type="journal article" date="2003" name="Proc. Natl. Acad. Sci. U.S.A.">
        <title>The genome sequence of Clostridium tetani, the causative agent of tetanus disease.</title>
        <authorList>
            <person name="Brueggemann H."/>
            <person name="Baeumer S."/>
            <person name="Fricke W.F."/>
            <person name="Wiezer A."/>
            <person name="Liesegang H."/>
            <person name="Decker I."/>
            <person name="Herzberg C."/>
            <person name="Martinez-Arias R."/>
            <person name="Merkl R."/>
            <person name="Henne A."/>
            <person name="Gottschalk G."/>
        </authorList>
    </citation>
    <scope>NUCLEOTIDE SEQUENCE [LARGE SCALE GENOMIC DNA]</scope>
    <source>
        <strain>Massachusetts / E88</strain>
    </source>
</reference>
<proteinExistence type="inferred from homology"/>
<sequence>MDKEKLKAIEAAMGNIEKQFGKGSVMKLGEKNILDIEAISTGCLGMDIALGIGGVPKGRIVEIYGPESSGKTTVALHIIAEAQKNGGVAAFIDAEHALDPSYARKLGVDIDNLIVSQPDTGEQGLEIAEALVRSNAIDIVVVDSVAALVPKAEIQGEMGDSHVGLQARLMSQALRKLAGSINKSNCVAIFINQLREKVGIMFGSPETTPGGRALKFYSSVRLDVRRIDTIKQGDEFLGNRTRVKVTKNKVAPPFKNAEFDIMYNEGISRTGDVLDLGVKEEIVQKSGSWFSYNDVRLGQGRENAKQFLKDNPELLYEIENTIREKYDLPIVKNNIKAEVEDKKEKKAEEV</sequence>
<evidence type="ECO:0000255" key="1">
    <source>
        <dbReference type="HAMAP-Rule" id="MF_00268"/>
    </source>
</evidence>
<organism>
    <name type="scientific">Clostridium tetani (strain Massachusetts / E88)</name>
    <dbReference type="NCBI Taxonomy" id="212717"/>
    <lineage>
        <taxon>Bacteria</taxon>
        <taxon>Bacillati</taxon>
        <taxon>Bacillota</taxon>
        <taxon>Clostridia</taxon>
        <taxon>Eubacteriales</taxon>
        <taxon>Clostridiaceae</taxon>
        <taxon>Clostridium</taxon>
    </lineage>
</organism>
<comment type="function">
    <text evidence="1">Can catalyze the hydrolysis of ATP in the presence of single-stranded DNA, the ATP-dependent uptake of single-stranded DNA by duplex DNA, and the ATP-dependent hybridization of homologous single-stranded DNAs. It interacts with LexA causing its activation and leading to its autocatalytic cleavage.</text>
</comment>
<comment type="subcellular location">
    <subcellularLocation>
        <location evidence="1">Cytoplasm</location>
    </subcellularLocation>
</comment>
<comment type="similarity">
    <text evidence="1">Belongs to the RecA family.</text>
</comment>
<keyword id="KW-0067">ATP-binding</keyword>
<keyword id="KW-0963">Cytoplasm</keyword>
<keyword id="KW-0227">DNA damage</keyword>
<keyword id="KW-0233">DNA recombination</keyword>
<keyword id="KW-0234">DNA repair</keyword>
<keyword id="KW-0238">DNA-binding</keyword>
<keyword id="KW-0547">Nucleotide-binding</keyword>
<keyword id="KW-1185">Reference proteome</keyword>
<keyword id="KW-0742">SOS response</keyword>
<name>RECA_CLOTE</name>
<dbReference type="EMBL" id="AE015927">
    <property type="protein sequence ID" value="AAO35855.1"/>
    <property type="molecule type" value="Genomic_DNA"/>
</dbReference>
<dbReference type="SMR" id="Q895I5"/>
<dbReference type="STRING" id="212717.CTC_01289"/>
<dbReference type="KEGG" id="ctc:CTC_01289"/>
<dbReference type="HOGENOM" id="CLU_040469_3_2_9"/>
<dbReference type="OrthoDB" id="9776733at2"/>
<dbReference type="Proteomes" id="UP000001412">
    <property type="component" value="Chromosome"/>
</dbReference>
<dbReference type="GO" id="GO:0005829">
    <property type="term" value="C:cytosol"/>
    <property type="evidence" value="ECO:0007669"/>
    <property type="project" value="TreeGrafter"/>
</dbReference>
<dbReference type="GO" id="GO:0005524">
    <property type="term" value="F:ATP binding"/>
    <property type="evidence" value="ECO:0007669"/>
    <property type="project" value="UniProtKB-UniRule"/>
</dbReference>
<dbReference type="GO" id="GO:0016887">
    <property type="term" value="F:ATP hydrolysis activity"/>
    <property type="evidence" value="ECO:0007669"/>
    <property type="project" value="InterPro"/>
</dbReference>
<dbReference type="GO" id="GO:0140664">
    <property type="term" value="F:ATP-dependent DNA damage sensor activity"/>
    <property type="evidence" value="ECO:0007669"/>
    <property type="project" value="InterPro"/>
</dbReference>
<dbReference type="GO" id="GO:0003684">
    <property type="term" value="F:damaged DNA binding"/>
    <property type="evidence" value="ECO:0007669"/>
    <property type="project" value="UniProtKB-UniRule"/>
</dbReference>
<dbReference type="GO" id="GO:0003697">
    <property type="term" value="F:single-stranded DNA binding"/>
    <property type="evidence" value="ECO:0007669"/>
    <property type="project" value="UniProtKB-UniRule"/>
</dbReference>
<dbReference type="GO" id="GO:0006310">
    <property type="term" value="P:DNA recombination"/>
    <property type="evidence" value="ECO:0007669"/>
    <property type="project" value="UniProtKB-UniRule"/>
</dbReference>
<dbReference type="GO" id="GO:0006281">
    <property type="term" value="P:DNA repair"/>
    <property type="evidence" value="ECO:0007669"/>
    <property type="project" value="UniProtKB-UniRule"/>
</dbReference>
<dbReference type="GO" id="GO:0009432">
    <property type="term" value="P:SOS response"/>
    <property type="evidence" value="ECO:0007669"/>
    <property type="project" value="UniProtKB-UniRule"/>
</dbReference>
<dbReference type="CDD" id="cd00983">
    <property type="entry name" value="RecA"/>
    <property type="match status" value="1"/>
</dbReference>
<dbReference type="FunFam" id="3.40.50.300:FF:000087">
    <property type="entry name" value="Recombinase RecA"/>
    <property type="match status" value="1"/>
</dbReference>
<dbReference type="Gene3D" id="3.40.50.300">
    <property type="entry name" value="P-loop containing nucleotide triphosphate hydrolases"/>
    <property type="match status" value="1"/>
</dbReference>
<dbReference type="HAMAP" id="MF_00268">
    <property type="entry name" value="RecA"/>
    <property type="match status" value="1"/>
</dbReference>
<dbReference type="InterPro" id="IPR003593">
    <property type="entry name" value="AAA+_ATPase"/>
</dbReference>
<dbReference type="InterPro" id="IPR013765">
    <property type="entry name" value="DNA_recomb/repair_RecA"/>
</dbReference>
<dbReference type="InterPro" id="IPR020584">
    <property type="entry name" value="DNA_recomb/repair_RecA_CS"/>
</dbReference>
<dbReference type="InterPro" id="IPR027417">
    <property type="entry name" value="P-loop_NTPase"/>
</dbReference>
<dbReference type="InterPro" id="IPR049261">
    <property type="entry name" value="RecA-like_C"/>
</dbReference>
<dbReference type="InterPro" id="IPR049428">
    <property type="entry name" value="RecA-like_N"/>
</dbReference>
<dbReference type="InterPro" id="IPR020588">
    <property type="entry name" value="RecA_ATP-bd"/>
</dbReference>
<dbReference type="InterPro" id="IPR023400">
    <property type="entry name" value="RecA_C_sf"/>
</dbReference>
<dbReference type="InterPro" id="IPR020587">
    <property type="entry name" value="RecA_monomer-monomer_interface"/>
</dbReference>
<dbReference type="NCBIfam" id="TIGR02012">
    <property type="entry name" value="tigrfam_recA"/>
    <property type="match status" value="1"/>
</dbReference>
<dbReference type="PANTHER" id="PTHR45900:SF1">
    <property type="entry name" value="MITOCHONDRIAL DNA REPAIR PROTEIN RECA HOMOLOG-RELATED"/>
    <property type="match status" value="1"/>
</dbReference>
<dbReference type="PANTHER" id="PTHR45900">
    <property type="entry name" value="RECA"/>
    <property type="match status" value="1"/>
</dbReference>
<dbReference type="Pfam" id="PF00154">
    <property type="entry name" value="RecA"/>
    <property type="match status" value="1"/>
</dbReference>
<dbReference type="Pfam" id="PF21096">
    <property type="entry name" value="RecA_C"/>
    <property type="match status" value="1"/>
</dbReference>
<dbReference type="PRINTS" id="PR00142">
    <property type="entry name" value="RECA"/>
</dbReference>
<dbReference type="SMART" id="SM00382">
    <property type="entry name" value="AAA"/>
    <property type="match status" value="1"/>
</dbReference>
<dbReference type="SUPFAM" id="SSF52540">
    <property type="entry name" value="P-loop containing nucleoside triphosphate hydrolases"/>
    <property type="match status" value="1"/>
</dbReference>
<dbReference type="SUPFAM" id="SSF54752">
    <property type="entry name" value="RecA protein, C-terminal domain"/>
    <property type="match status" value="1"/>
</dbReference>
<dbReference type="PROSITE" id="PS00321">
    <property type="entry name" value="RECA_1"/>
    <property type="match status" value="1"/>
</dbReference>
<dbReference type="PROSITE" id="PS50162">
    <property type="entry name" value="RECA_2"/>
    <property type="match status" value="1"/>
</dbReference>
<dbReference type="PROSITE" id="PS50163">
    <property type="entry name" value="RECA_3"/>
    <property type="match status" value="1"/>
</dbReference>
<gene>
    <name evidence="1" type="primary">recA</name>
    <name type="ordered locus">CTC_01289</name>
</gene>
<protein>
    <recommendedName>
        <fullName evidence="1">Protein RecA</fullName>
    </recommendedName>
    <alternativeName>
        <fullName evidence="1">Recombinase A</fullName>
    </alternativeName>
</protein>